<name>ST3L1_HUMAN</name>
<proteinExistence type="uncertain"/>
<reference key="1">
    <citation type="journal article" date="2003" name="Nature">
        <title>The DNA sequence of human chromosome 7.</title>
        <authorList>
            <person name="Hillier L.W."/>
            <person name="Fulton R.S."/>
            <person name="Fulton L.A."/>
            <person name="Graves T.A."/>
            <person name="Pepin K.H."/>
            <person name="Wagner-McPherson C."/>
            <person name="Layman D."/>
            <person name="Maas J."/>
            <person name="Jaeger S."/>
            <person name="Walker R."/>
            <person name="Wylie K."/>
            <person name="Sekhon M."/>
            <person name="Becker M.C."/>
            <person name="O'Laughlin M.D."/>
            <person name="Schaller M.E."/>
            <person name="Fewell G.A."/>
            <person name="Delehaunty K.D."/>
            <person name="Miner T.L."/>
            <person name="Nash W.E."/>
            <person name="Cordes M."/>
            <person name="Du H."/>
            <person name="Sun H."/>
            <person name="Edwards J."/>
            <person name="Bradshaw-Cordum H."/>
            <person name="Ali J."/>
            <person name="Andrews S."/>
            <person name="Isak A."/>
            <person name="Vanbrunt A."/>
            <person name="Nguyen C."/>
            <person name="Du F."/>
            <person name="Lamar B."/>
            <person name="Courtney L."/>
            <person name="Kalicki J."/>
            <person name="Ozersky P."/>
            <person name="Bielicki L."/>
            <person name="Scott K."/>
            <person name="Holmes A."/>
            <person name="Harkins R."/>
            <person name="Harris A."/>
            <person name="Strong C.M."/>
            <person name="Hou S."/>
            <person name="Tomlinson C."/>
            <person name="Dauphin-Kohlberg S."/>
            <person name="Kozlowicz-Reilly A."/>
            <person name="Leonard S."/>
            <person name="Rohlfing T."/>
            <person name="Rock S.M."/>
            <person name="Tin-Wollam A.-M."/>
            <person name="Abbott A."/>
            <person name="Minx P."/>
            <person name="Maupin R."/>
            <person name="Strowmatt C."/>
            <person name="Latreille P."/>
            <person name="Miller N."/>
            <person name="Johnson D."/>
            <person name="Murray J."/>
            <person name="Woessner J.P."/>
            <person name="Wendl M.C."/>
            <person name="Yang S.-P."/>
            <person name="Schultz B.R."/>
            <person name="Wallis J.W."/>
            <person name="Spieth J."/>
            <person name="Bieri T.A."/>
            <person name="Nelson J.O."/>
            <person name="Berkowicz N."/>
            <person name="Wohldmann P.E."/>
            <person name="Cook L.L."/>
            <person name="Hickenbotham M.T."/>
            <person name="Eldred J."/>
            <person name="Williams D."/>
            <person name="Bedell J.A."/>
            <person name="Mardis E.R."/>
            <person name="Clifton S.W."/>
            <person name="Chissoe S.L."/>
            <person name="Marra M.A."/>
            <person name="Raymond C."/>
            <person name="Haugen E."/>
            <person name="Gillett W."/>
            <person name="Zhou Y."/>
            <person name="James R."/>
            <person name="Phelps K."/>
            <person name="Iadanoto S."/>
            <person name="Bubb K."/>
            <person name="Simms E."/>
            <person name="Levy R."/>
            <person name="Clendenning J."/>
            <person name="Kaul R."/>
            <person name="Kent W.J."/>
            <person name="Furey T.S."/>
            <person name="Baertsch R.A."/>
            <person name="Brent M.R."/>
            <person name="Keibler E."/>
            <person name="Flicek P."/>
            <person name="Bork P."/>
            <person name="Suyama M."/>
            <person name="Bailey J.A."/>
            <person name="Portnoy M.E."/>
            <person name="Torrents D."/>
            <person name="Chinwalla A.T."/>
            <person name="Gish W.R."/>
            <person name="Eddy S.R."/>
            <person name="McPherson J.D."/>
            <person name="Olson M.V."/>
            <person name="Eichler E.E."/>
            <person name="Green E.D."/>
            <person name="Waterston R.H."/>
            <person name="Wilson R.K."/>
        </authorList>
    </citation>
    <scope>NUCLEOTIDE SEQUENCE [LARGE SCALE GENOMIC DNA]</scope>
</reference>
<sequence length="205" mass="23775">MIFSMLRKLPKVTCRDVLPEIRAICIEEIGCWMQSYSTSFLTDSYLKYIGWTLHDKHREVRVKCVKALKGLYGNRDLTARLELFTGRFKDWMVSMIVDREYSVAVEAVRLLILILKLFYPECEIRTMGGREQRQSPGAQRTFFQLLLSFFVESKLHDHAAYLVDNLWDCAGTQLKDWEGLTSLLLEKDQSTCHMEPGPGTFHLLG</sequence>
<keyword id="KW-0539">Nucleus</keyword>
<keyword id="KW-1267">Proteomics identification</keyword>
<keyword id="KW-1185">Reference proteome</keyword>
<dbReference type="EMBL" id="AC006014">
    <property type="status" value="NOT_ANNOTATED_CDS"/>
    <property type="molecule type" value="Genomic_DNA"/>
</dbReference>
<dbReference type="SMR" id="P0CL83"/>
<dbReference type="IntAct" id="P0CL83">
    <property type="interactions" value="1"/>
</dbReference>
<dbReference type="iPTMnet" id="P0CL83"/>
<dbReference type="PhosphoSitePlus" id="P0CL83"/>
<dbReference type="BioMuta" id="HGNC:33852"/>
<dbReference type="DMDM" id="332321725"/>
<dbReference type="jPOST" id="P0CL83"/>
<dbReference type="MassIVE" id="P0CL83"/>
<dbReference type="AGR" id="HGNC:33852"/>
<dbReference type="GeneCards" id="STAG3L1"/>
<dbReference type="HGNC" id="HGNC:33852">
    <property type="gene designation" value="STAG3L1"/>
</dbReference>
<dbReference type="neXtProt" id="NX_P0CL83"/>
<dbReference type="InParanoid" id="P0CL83"/>
<dbReference type="PAN-GO" id="P0CL83">
    <property type="GO annotations" value="5 GO annotations based on evolutionary models"/>
</dbReference>
<dbReference type="PhylomeDB" id="P0CL83"/>
<dbReference type="PathwayCommons" id="P0CL83"/>
<dbReference type="ChiTaRS" id="STAG3L1">
    <property type="organism name" value="human"/>
</dbReference>
<dbReference type="Pharos" id="P0CL83">
    <property type="development level" value="Tdark"/>
</dbReference>
<dbReference type="PRO" id="PR:P0CL83"/>
<dbReference type="Proteomes" id="UP000005640">
    <property type="component" value="Unplaced"/>
</dbReference>
<dbReference type="RNAct" id="P0CL83">
    <property type="molecule type" value="protein"/>
</dbReference>
<dbReference type="GO" id="GO:0005634">
    <property type="term" value="C:nucleus"/>
    <property type="evidence" value="ECO:0007669"/>
    <property type="project" value="UniProtKB-SubCell"/>
</dbReference>
<dbReference type="FunFam" id="1.25.10.10:FF:001129">
    <property type="entry name" value="Putative STAG3-like protein 1"/>
    <property type="match status" value="1"/>
</dbReference>
<dbReference type="Gene3D" id="1.25.10.10">
    <property type="entry name" value="Leucine-rich Repeat Variant"/>
    <property type="match status" value="1"/>
</dbReference>
<dbReference type="InterPro" id="IPR011989">
    <property type="entry name" value="ARM-like"/>
</dbReference>
<dbReference type="InterPro" id="IPR016024">
    <property type="entry name" value="ARM-type_fold"/>
</dbReference>
<dbReference type="InterPro" id="IPR039662">
    <property type="entry name" value="Cohesin_Scc3/SA"/>
</dbReference>
<dbReference type="InterPro" id="IPR056396">
    <property type="entry name" value="HEAT_SCC3-SA"/>
</dbReference>
<dbReference type="InterPro" id="IPR020839">
    <property type="entry name" value="SCD"/>
</dbReference>
<dbReference type="PANTHER" id="PTHR11199:SF8">
    <property type="entry name" value="COHESIN SUBUNIT SA-3"/>
    <property type="match status" value="1"/>
</dbReference>
<dbReference type="PANTHER" id="PTHR11199">
    <property type="entry name" value="STROMAL ANTIGEN"/>
    <property type="match status" value="1"/>
</dbReference>
<dbReference type="Pfam" id="PF24571">
    <property type="entry name" value="HEAT_SCC3-SA"/>
    <property type="match status" value="1"/>
</dbReference>
<dbReference type="Pfam" id="PF21581">
    <property type="entry name" value="SCD"/>
    <property type="match status" value="1"/>
</dbReference>
<dbReference type="SUPFAM" id="SSF48371">
    <property type="entry name" value="ARM repeat"/>
    <property type="match status" value="1"/>
</dbReference>
<dbReference type="PROSITE" id="PS51425">
    <property type="entry name" value="SCD"/>
    <property type="match status" value="1"/>
</dbReference>
<gene>
    <name type="primary">STAG3L1</name>
</gene>
<comment type="subcellular location">
    <subcellularLocation>
        <location evidence="1">Nucleus</location>
    </subcellularLocation>
</comment>
<comment type="similarity">
    <text evidence="2">Belongs to the SCC3 family.</text>
</comment>
<comment type="caution">
    <text evidence="2">Could be the product of a pseudogene.</text>
</comment>
<feature type="chain" id="PRO_0000324310" description="Putative STAG3-like protein 1">
    <location>
        <begin position="1"/>
        <end position="205"/>
    </location>
</feature>
<feature type="domain" description="SCD" evidence="1">
    <location>
        <begin position="10"/>
        <end position="95"/>
    </location>
</feature>
<accession>P0CL83</accession>
<accession>A6NMT8</accession>
<accession>A8K0A1</accession>
<accession>Q32NE4</accession>
<accession>Q6NXR2</accession>
<accession>Q7L5M5</accession>
<accession>Q7Z5K6</accession>
<evidence type="ECO:0000255" key="1">
    <source>
        <dbReference type="PROSITE-ProRule" id="PRU00750"/>
    </source>
</evidence>
<evidence type="ECO:0000305" key="2"/>
<protein>
    <recommendedName>
        <fullName>Putative STAG3-like protein 1</fullName>
    </recommendedName>
    <alternativeName>
        <fullName>Stromal antigen 3-like protein 1</fullName>
    </alternativeName>
</protein>
<organism>
    <name type="scientific">Homo sapiens</name>
    <name type="common">Human</name>
    <dbReference type="NCBI Taxonomy" id="9606"/>
    <lineage>
        <taxon>Eukaryota</taxon>
        <taxon>Metazoa</taxon>
        <taxon>Chordata</taxon>
        <taxon>Craniata</taxon>
        <taxon>Vertebrata</taxon>
        <taxon>Euteleostomi</taxon>
        <taxon>Mammalia</taxon>
        <taxon>Eutheria</taxon>
        <taxon>Euarchontoglires</taxon>
        <taxon>Primates</taxon>
        <taxon>Haplorrhini</taxon>
        <taxon>Catarrhini</taxon>
        <taxon>Hominidae</taxon>
        <taxon>Homo</taxon>
    </lineage>
</organism>